<organism>
    <name type="scientific">Enterococcus faecalis (strain ATCC 700802 / V583)</name>
    <dbReference type="NCBI Taxonomy" id="226185"/>
    <lineage>
        <taxon>Bacteria</taxon>
        <taxon>Bacillati</taxon>
        <taxon>Bacillota</taxon>
        <taxon>Bacilli</taxon>
        <taxon>Lactobacillales</taxon>
        <taxon>Enterococcaceae</taxon>
        <taxon>Enterococcus</taxon>
    </lineage>
</organism>
<reference key="1">
    <citation type="journal article" date="2003" name="Science">
        <title>Role of mobile DNA in the evolution of vancomycin-resistant Enterococcus faecalis.</title>
        <authorList>
            <person name="Paulsen I.T."/>
            <person name="Banerjei L."/>
            <person name="Myers G.S.A."/>
            <person name="Nelson K.E."/>
            <person name="Seshadri R."/>
            <person name="Read T.D."/>
            <person name="Fouts D.E."/>
            <person name="Eisen J.A."/>
            <person name="Gill S.R."/>
            <person name="Heidelberg J.F."/>
            <person name="Tettelin H."/>
            <person name="Dodson R.J."/>
            <person name="Umayam L.A."/>
            <person name="Brinkac L.M."/>
            <person name="Beanan M.J."/>
            <person name="Daugherty S.C."/>
            <person name="DeBoy R.T."/>
            <person name="Durkin S.A."/>
            <person name="Kolonay J.F."/>
            <person name="Madupu R."/>
            <person name="Nelson W.C."/>
            <person name="Vamathevan J.J."/>
            <person name="Tran B."/>
            <person name="Upton J."/>
            <person name="Hansen T."/>
            <person name="Shetty J."/>
            <person name="Khouri H.M."/>
            <person name="Utterback T.R."/>
            <person name="Radune D."/>
            <person name="Ketchum K.A."/>
            <person name="Dougherty B.A."/>
            <person name="Fraser C.M."/>
        </authorList>
    </citation>
    <scope>NUCLEOTIDE SEQUENCE [LARGE SCALE GENOMIC DNA]</scope>
    <source>
        <strain>ATCC 700802 / V583</strain>
    </source>
</reference>
<evidence type="ECO:0000250" key="1"/>
<evidence type="ECO:0000305" key="2"/>
<gene>
    <name type="primary">sodA</name>
    <name type="ordered locus">EF_0463</name>
</gene>
<proteinExistence type="inferred from homology"/>
<dbReference type="EC" id="1.15.1.1"/>
<dbReference type="EMBL" id="AE016830">
    <property type="protein sequence ID" value="AAO80318.1"/>
    <property type="molecule type" value="Genomic_DNA"/>
</dbReference>
<dbReference type="RefSeq" id="NP_814247.1">
    <property type="nucleotide sequence ID" value="NC_004668.1"/>
</dbReference>
<dbReference type="RefSeq" id="WP_002387688.1">
    <property type="nucleotide sequence ID" value="NZ_KE136524.1"/>
</dbReference>
<dbReference type="SMR" id="Q838I4"/>
<dbReference type="STRING" id="226185.EF_0463"/>
<dbReference type="EnsemblBacteria" id="AAO80318">
    <property type="protein sequence ID" value="AAO80318"/>
    <property type="gene ID" value="EF_0463"/>
</dbReference>
<dbReference type="KEGG" id="efa:EF0463"/>
<dbReference type="PATRIC" id="fig|226185.45.peg.2872"/>
<dbReference type="eggNOG" id="COG0605">
    <property type="taxonomic scope" value="Bacteria"/>
</dbReference>
<dbReference type="HOGENOM" id="CLU_031625_0_1_9"/>
<dbReference type="Proteomes" id="UP000001415">
    <property type="component" value="Chromosome"/>
</dbReference>
<dbReference type="GO" id="GO:0005737">
    <property type="term" value="C:cytoplasm"/>
    <property type="evidence" value="ECO:0007669"/>
    <property type="project" value="TreeGrafter"/>
</dbReference>
<dbReference type="GO" id="GO:0046872">
    <property type="term" value="F:metal ion binding"/>
    <property type="evidence" value="ECO:0007669"/>
    <property type="project" value="UniProtKB-KW"/>
</dbReference>
<dbReference type="GO" id="GO:0004784">
    <property type="term" value="F:superoxide dismutase activity"/>
    <property type="evidence" value="ECO:0007669"/>
    <property type="project" value="UniProtKB-EC"/>
</dbReference>
<dbReference type="FunFam" id="1.10.287.990:FF:000001">
    <property type="entry name" value="Superoxide dismutase"/>
    <property type="match status" value="1"/>
</dbReference>
<dbReference type="FunFam" id="3.55.40.20:FF:000001">
    <property type="entry name" value="Superoxide dismutase"/>
    <property type="match status" value="1"/>
</dbReference>
<dbReference type="Gene3D" id="1.10.287.990">
    <property type="entry name" value="Fe,Mn superoxide dismutase (SOD) domain"/>
    <property type="match status" value="1"/>
</dbReference>
<dbReference type="Gene3D" id="3.55.40.20">
    <property type="entry name" value="Iron/manganese superoxide dismutase, C-terminal domain"/>
    <property type="match status" value="1"/>
</dbReference>
<dbReference type="InterPro" id="IPR001189">
    <property type="entry name" value="Mn/Fe_SOD"/>
</dbReference>
<dbReference type="InterPro" id="IPR019833">
    <property type="entry name" value="Mn/Fe_SOD_BS"/>
</dbReference>
<dbReference type="InterPro" id="IPR019832">
    <property type="entry name" value="Mn/Fe_SOD_C"/>
</dbReference>
<dbReference type="InterPro" id="IPR019831">
    <property type="entry name" value="Mn/Fe_SOD_N"/>
</dbReference>
<dbReference type="InterPro" id="IPR036324">
    <property type="entry name" value="Mn/Fe_SOD_N_sf"/>
</dbReference>
<dbReference type="InterPro" id="IPR036314">
    <property type="entry name" value="SOD_C_sf"/>
</dbReference>
<dbReference type="PANTHER" id="PTHR43595">
    <property type="entry name" value="37S RIBOSOMAL PROTEIN S26, MITOCHONDRIAL"/>
    <property type="match status" value="1"/>
</dbReference>
<dbReference type="PANTHER" id="PTHR43595:SF2">
    <property type="entry name" value="SMALL RIBOSOMAL SUBUNIT PROTEIN MS42"/>
    <property type="match status" value="1"/>
</dbReference>
<dbReference type="Pfam" id="PF02777">
    <property type="entry name" value="Sod_Fe_C"/>
    <property type="match status" value="1"/>
</dbReference>
<dbReference type="Pfam" id="PF00081">
    <property type="entry name" value="Sod_Fe_N"/>
    <property type="match status" value="1"/>
</dbReference>
<dbReference type="PIRSF" id="PIRSF000349">
    <property type="entry name" value="SODismutase"/>
    <property type="match status" value="1"/>
</dbReference>
<dbReference type="PRINTS" id="PR01703">
    <property type="entry name" value="MNSODISMTASE"/>
</dbReference>
<dbReference type="SUPFAM" id="SSF54719">
    <property type="entry name" value="Fe,Mn superoxide dismutase (SOD), C-terminal domain"/>
    <property type="match status" value="1"/>
</dbReference>
<dbReference type="SUPFAM" id="SSF46609">
    <property type="entry name" value="Fe,Mn superoxide dismutase (SOD), N-terminal domain"/>
    <property type="match status" value="1"/>
</dbReference>
<dbReference type="PROSITE" id="PS00088">
    <property type="entry name" value="SOD_MN"/>
    <property type="match status" value="1"/>
</dbReference>
<name>SODM_ENTFA</name>
<accession>Q838I4</accession>
<feature type="chain" id="PRO_0000160037" description="Superoxide dismutase [Fe]">
    <location>
        <begin position="1"/>
        <end position="202"/>
    </location>
</feature>
<feature type="binding site" evidence="1">
    <location>
        <position position="27"/>
    </location>
    <ligand>
        <name>Fe cation</name>
        <dbReference type="ChEBI" id="CHEBI:24875"/>
    </ligand>
</feature>
<feature type="binding site" evidence="1">
    <location>
        <position position="82"/>
    </location>
    <ligand>
        <name>Fe cation</name>
        <dbReference type="ChEBI" id="CHEBI:24875"/>
    </ligand>
</feature>
<feature type="binding site" evidence="1">
    <location>
        <position position="164"/>
    </location>
    <ligand>
        <name>Fe cation</name>
        <dbReference type="ChEBI" id="CHEBI:24875"/>
    </ligand>
</feature>
<feature type="binding site" evidence="1">
    <location>
        <position position="168"/>
    </location>
    <ligand>
        <name>Fe cation</name>
        <dbReference type="ChEBI" id="CHEBI:24875"/>
    </ligand>
</feature>
<protein>
    <recommendedName>
        <fullName>Superoxide dismutase [Fe]</fullName>
        <ecNumber>1.15.1.1</ecNumber>
    </recommendedName>
</protein>
<keyword id="KW-0408">Iron</keyword>
<keyword id="KW-0479">Metal-binding</keyword>
<keyword id="KW-0560">Oxidoreductase</keyword>
<keyword id="KW-1185">Reference proteome</keyword>
<sequence length="202" mass="22697">MTYTLPELPYAYDALEPYIDVETMHLHHDKHHNTYVTNLNAAIEKHPELGEKSVENLISDMNAIPEDIRTAVRNNGGGHANHTFFWEIMAPNAGGQPTGAIKEAIDETFGSFDEMKAAFKTAATGRFGSGWAWLVVNNGKLEITSTPNQDSPLMDGQTPVLGLDVWEHAYYLKYKNVRPDYIEAFWNVVNWDKVNELFAAAK</sequence>
<comment type="function">
    <text>Destroys superoxide anion radicals which are normally produced within the cells and which are toxic to biological systems.</text>
</comment>
<comment type="catalytic activity">
    <reaction>
        <text>2 superoxide + 2 H(+) = H2O2 + O2</text>
        <dbReference type="Rhea" id="RHEA:20696"/>
        <dbReference type="ChEBI" id="CHEBI:15378"/>
        <dbReference type="ChEBI" id="CHEBI:15379"/>
        <dbReference type="ChEBI" id="CHEBI:16240"/>
        <dbReference type="ChEBI" id="CHEBI:18421"/>
        <dbReference type="EC" id="1.15.1.1"/>
    </reaction>
</comment>
<comment type="cofactor">
    <cofactor evidence="1">
        <name>Fe cation</name>
        <dbReference type="ChEBI" id="CHEBI:24875"/>
    </cofactor>
    <text evidence="1">Binds 1 Fe cation per subunit.</text>
</comment>
<comment type="subunit">
    <text>Homodimer.</text>
</comment>
<comment type="similarity">
    <text evidence="2">Belongs to the iron/manganese superoxide dismutase family.</text>
</comment>